<feature type="chain" id="PRO_0000288970" description="Lipase member J">
    <location>
        <begin position="1"/>
        <end position="366"/>
    </location>
</feature>
<feature type="active site" description="Nucleophile" evidence="1">
    <location>
        <position position="141"/>
    </location>
</feature>
<feature type="active site" description="Charge relay system" evidence="2">
    <location>
        <position position="312"/>
    </location>
</feature>
<feature type="active site" description="Charge relay system" evidence="2">
    <location>
        <position position="341"/>
    </location>
</feature>
<feature type="sequence variant" id="VAR_032543" description="In dbSNP:rs1409136." evidence="3">
    <original>I</original>
    <variation>V</variation>
    <location>
        <position position="210"/>
    </location>
</feature>
<organism>
    <name type="scientific">Homo sapiens</name>
    <name type="common">Human</name>
    <dbReference type="NCBI Taxonomy" id="9606"/>
    <lineage>
        <taxon>Eukaryota</taxon>
        <taxon>Metazoa</taxon>
        <taxon>Chordata</taxon>
        <taxon>Craniata</taxon>
        <taxon>Vertebrata</taxon>
        <taxon>Euteleostomi</taxon>
        <taxon>Mammalia</taxon>
        <taxon>Eutheria</taxon>
        <taxon>Euarchontoglires</taxon>
        <taxon>Primates</taxon>
        <taxon>Haplorrhini</taxon>
        <taxon>Catarrhini</taxon>
        <taxon>Hominidae</taxon>
        <taxon>Homo</taxon>
    </lineage>
</organism>
<reference key="1">
    <citation type="journal article" date="2004" name="Nature">
        <title>The DNA sequence and comparative analysis of human chromosome 10.</title>
        <authorList>
            <person name="Deloukas P."/>
            <person name="Earthrowl M.E."/>
            <person name="Grafham D.V."/>
            <person name="Rubenfield M."/>
            <person name="French L."/>
            <person name="Steward C.A."/>
            <person name="Sims S.K."/>
            <person name="Jones M.C."/>
            <person name="Searle S."/>
            <person name="Scott C."/>
            <person name="Howe K."/>
            <person name="Hunt S.E."/>
            <person name="Andrews T.D."/>
            <person name="Gilbert J.G.R."/>
            <person name="Swarbreck D."/>
            <person name="Ashurst J.L."/>
            <person name="Taylor A."/>
            <person name="Battles J."/>
            <person name="Bird C.P."/>
            <person name="Ainscough R."/>
            <person name="Almeida J.P."/>
            <person name="Ashwell R.I.S."/>
            <person name="Ambrose K.D."/>
            <person name="Babbage A.K."/>
            <person name="Bagguley C.L."/>
            <person name="Bailey J."/>
            <person name="Banerjee R."/>
            <person name="Bates K."/>
            <person name="Beasley H."/>
            <person name="Bray-Allen S."/>
            <person name="Brown A.J."/>
            <person name="Brown J.Y."/>
            <person name="Burford D.C."/>
            <person name="Burrill W."/>
            <person name="Burton J."/>
            <person name="Cahill P."/>
            <person name="Camire D."/>
            <person name="Carter N.P."/>
            <person name="Chapman J.C."/>
            <person name="Clark S.Y."/>
            <person name="Clarke G."/>
            <person name="Clee C.M."/>
            <person name="Clegg S."/>
            <person name="Corby N."/>
            <person name="Coulson A."/>
            <person name="Dhami P."/>
            <person name="Dutta I."/>
            <person name="Dunn M."/>
            <person name="Faulkner L."/>
            <person name="Frankish A."/>
            <person name="Frankland J.A."/>
            <person name="Garner P."/>
            <person name="Garnett J."/>
            <person name="Gribble S."/>
            <person name="Griffiths C."/>
            <person name="Grocock R."/>
            <person name="Gustafson E."/>
            <person name="Hammond S."/>
            <person name="Harley J.L."/>
            <person name="Hart E."/>
            <person name="Heath P.D."/>
            <person name="Ho T.P."/>
            <person name="Hopkins B."/>
            <person name="Horne J."/>
            <person name="Howden P.J."/>
            <person name="Huckle E."/>
            <person name="Hynds C."/>
            <person name="Johnson C."/>
            <person name="Johnson D."/>
            <person name="Kana A."/>
            <person name="Kay M."/>
            <person name="Kimberley A.M."/>
            <person name="Kershaw J.K."/>
            <person name="Kokkinaki M."/>
            <person name="Laird G.K."/>
            <person name="Lawlor S."/>
            <person name="Lee H.M."/>
            <person name="Leongamornlert D.A."/>
            <person name="Laird G."/>
            <person name="Lloyd C."/>
            <person name="Lloyd D.M."/>
            <person name="Loveland J."/>
            <person name="Lovell J."/>
            <person name="McLaren S."/>
            <person name="McLay K.E."/>
            <person name="McMurray A."/>
            <person name="Mashreghi-Mohammadi M."/>
            <person name="Matthews L."/>
            <person name="Milne S."/>
            <person name="Nickerson T."/>
            <person name="Nguyen M."/>
            <person name="Overton-Larty E."/>
            <person name="Palmer S.A."/>
            <person name="Pearce A.V."/>
            <person name="Peck A.I."/>
            <person name="Pelan S."/>
            <person name="Phillimore B."/>
            <person name="Porter K."/>
            <person name="Rice C.M."/>
            <person name="Rogosin A."/>
            <person name="Ross M.T."/>
            <person name="Sarafidou T."/>
            <person name="Sehra H.K."/>
            <person name="Shownkeen R."/>
            <person name="Skuce C.D."/>
            <person name="Smith M."/>
            <person name="Standring L."/>
            <person name="Sycamore N."/>
            <person name="Tester J."/>
            <person name="Thorpe A."/>
            <person name="Torcasso W."/>
            <person name="Tracey A."/>
            <person name="Tromans A."/>
            <person name="Tsolas J."/>
            <person name="Wall M."/>
            <person name="Walsh J."/>
            <person name="Wang H."/>
            <person name="Weinstock K."/>
            <person name="West A.P."/>
            <person name="Willey D.L."/>
            <person name="Whitehead S.L."/>
            <person name="Wilming L."/>
            <person name="Wray P.W."/>
            <person name="Young L."/>
            <person name="Chen Y."/>
            <person name="Lovering R.C."/>
            <person name="Moschonas N.K."/>
            <person name="Siebert R."/>
            <person name="Fechtel K."/>
            <person name="Bentley D."/>
            <person name="Durbin R.M."/>
            <person name="Hubbard T."/>
            <person name="Doucette-Stamm L."/>
            <person name="Beck S."/>
            <person name="Smith D.R."/>
            <person name="Rogers J."/>
        </authorList>
    </citation>
    <scope>NUCLEOTIDE SEQUENCE [LARGE SCALE GENOMIC DNA]</scope>
</reference>
<reference key="2">
    <citation type="journal article" date="2004" name="Genome Res.">
        <title>The status, quality, and expansion of the NIH full-length cDNA project: the Mammalian Gene Collection (MGC).</title>
        <authorList>
            <consortium name="The MGC Project Team"/>
        </authorList>
    </citation>
    <scope>NUCLEOTIDE SEQUENCE [LARGE SCALE MRNA]</scope>
    <scope>VARIANT VAL-210</scope>
    <source>
        <tissue>Testis</tissue>
    </source>
</reference>
<keyword id="KW-0378">Hydrolase</keyword>
<keyword id="KW-0442">Lipid degradation</keyword>
<keyword id="KW-0443">Lipid metabolism</keyword>
<keyword id="KW-1185">Reference proteome</keyword>
<comment type="similarity">
    <text evidence="4">Belongs to the AB hydrolase superfamily. Lipase family.</text>
</comment>
<accession>Q5W064</accession>
<accession>A8MT98</accession>
<accession>Q0P671</accession>
<dbReference type="EC" id="3.1.1.-"/>
<dbReference type="EMBL" id="AL139406">
    <property type="status" value="NOT_ANNOTATED_CDS"/>
    <property type="molecule type" value="Genomic_DNA"/>
</dbReference>
<dbReference type="EMBL" id="BC031219">
    <property type="protein sequence ID" value="AAH31219.1"/>
    <property type="molecule type" value="mRNA"/>
</dbReference>
<dbReference type="CCDS" id="CCDS31240.1"/>
<dbReference type="RefSeq" id="NP_001010939.2">
    <property type="nucleotide sequence ID" value="NM_001010939.3"/>
</dbReference>
<dbReference type="RefSeq" id="XP_006717698.1">
    <property type="nucleotide sequence ID" value="XM_006717635.4"/>
</dbReference>
<dbReference type="RefSeq" id="XP_011537616.1">
    <property type="nucleotide sequence ID" value="XM_011539314.2"/>
</dbReference>
<dbReference type="RefSeq" id="XP_011537617.1">
    <property type="nucleotide sequence ID" value="XM_011539315.2"/>
</dbReference>
<dbReference type="SMR" id="Q5W064"/>
<dbReference type="FunCoup" id="Q5W064">
    <property type="interactions" value="33"/>
</dbReference>
<dbReference type="STRING" id="9606.ENSP00000361007"/>
<dbReference type="ESTHER" id="human-LIPJ">
    <property type="family name" value="Acidic_Lipase"/>
</dbReference>
<dbReference type="MEROPS" id="S33.020"/>
<dbReference type="GlyConnect" id="1458">
    <property type="glycosylation" value="3 N-Linked glycans (1 site)"/>
</dbReference>
<dbReference type="GlyCosmos" id="Q5W064">
    <property type="glycosylation" value="1 site, 3 glycans"/>
</dbReference>
<dbReference type="GlyGen" id="Q5W064">
    <property type="glycosylation" value="1 site, 3 N-linked glycans (1 site)"/>
</dbReference>
<dbReference type="iPTMnet" id="Q5W064"/>
<dbReference type="PhosphoSitePlus" id="Q5W064"/>
<dbReference type="BioMuta" id="LIPJ"/>
<dbReference type="DMDM" id="317373431"/>
<dbReference type="MassIVE" id="Q5W064"/>
<dbReference type="PaxDb" id="9606-ENSP00000361007"/>
<dbReference type="PeptideAtlas" id="Q5W064"/>
<dbReference type="Antibodypedia" id="30190">
    <property type="antibodies" value="76 antibodies from 14 providers"/>
</dbReference>
<dbReference type="DNASU" id="142910"/>
<dbReference type="Ensembl" id="ENST00000371939.7">
    <property type="protein sequence ID" value="ENSP00000361007.3"/>
    <property type="gene ID" value="ENSG00000204022.9"/>
</dbReference>
<dbReference type="GeneID" id="142910"/>
<dbReference type="KEGG" id="hsa:142910"/>
<dbReference type="MANE-Select" id="ENST00000371939.7">
    <property type="protein sequence ID" value="ENSP00000361007.3"/>
    <property type="RefSeq nucleotide sequence ID" value="NM_001010939.3"/>
    <property type="RefSeq protein sequence ID" value="NP_001010939.2"/>
</dbReference>
<dbReference type="UCSC" id="uc001kff.3">
    <property type="organism name" value="human"/>
</dbReference>
<dbReference type="AGR" id="HGNC:21773"/>
<dbReference type="CTD" id="142910"/>
<dbReference type="DisGeNET" id="142910"/>
<dbReference type="GeneCards" id="LIPJ"/>
<dbReference type="HGNC" id="HGNC:21773">
    <property type="gene designation" value="LIPJ"/>
</dbReference>
<dbReference type="HPA" id="ENSG00000204022">
    <property type="expression patterns" value="Tissue enriched (testis)"/>
</dbReference>
<dbReference type="MIM" id="613921">
    <property type="type" value="gene"/>
</dbReference>
<dbReference type="neXtProt" id="NX_Q5W064"/>
<dbReference type="OpenTargets" id="ENSG00000204022"/>
<dbReference type="PharmGKB" id="PA162394099"/>
<dbReference type="VEuPathDB" id="HostDB:ENSG00000204022"/>
<dbReference type="eggNOG" id="KOG2624">
    <property type="taxonomic scope" value="Eukaryota"/>
</dbReference>
<dbReference type="GeneTree" id="ENSGT00940000163386"/>
<dbReference type="HOGENOM" id="CLU_010974_0_0_1"/>
<dbReference type="InParanoid" id="Q5W064"/>
<dbReference type="OMA" id="PHGLGME"/>
<dbReference type="OrthoDB" id="9974421at2759"/>
<dbReference type="PAN-GO" id="Q5W064">
    <property type="GO annotations" value="1 GO annotation based on evolutionary models"/>
</dbReference>
<dbReference type="PhylomeDB" id="Q5W064"/>
<dbReference type="TreeFam" id="TF315485"/>
<dbReference type="PathwayCommons" id="Q5W064"/>
<dbReference type="Reactome" id="R-HSA-6809371">
    <property type="pathway name" value="Formation of the cornified envelope"/>
</dbReference>
<dbReference type="BioGRID-ORCS" id="142910">
    <property type="hits" value="14 hits in 1115 CRISPR screens"/>
</dbReference>
<dbReference type="GenomeRNAi" id="142910"/>
<dbReference type="Pharos" id="Q5W064">
    <property type="development level" value="Tbio"/>
</dbReference>
<dbReference type="PRO" id="PR:Q5W064"/>
<dbReference type="Proteomes" id="UP000005640">
    <property type="component" value="Chromosome 10"/>
</dbReference>
<dbReference type="RNAct" id="Q5W064">
    <property type="molecule type" value="protein"/>
</dbReference>
<dbReference type="Bgee" id="ENSG00000204022">
    <property type="expression patterns" value="Expressed in male germ line stem cell (sensu Vertebrata) in testis and 93 other cell types or tissues"/>
</dbReference>
<dbReference type="ExpressionAtlas" id="Q5W064">
    <property type="expression patterns" value="baseline and differential"/>
</dbReference>
<dbReference type="GO" id="GO:0043231">
    <property type="term" value="C:intracellular membrane-bounded organelle"/>
    <property type="evidence" value="ECO:0000318"/>
    <property type="project" value="GO_Central"/>
</dbReference>
<dbReference type="GO" id="GO:0016788">
    <property type="term" value="F:hydrolase activity, acting on ester bonds"/>
    <property type="evidence" value="ECO:0007669"/>
    <property type="project" value="InterPro"/>
</dbReference>
<dbReference type="GO" id="GO:0016042">
    <property type="term" value="P:lipid catabolic process"/>
    <property type="evidence" value="ECO:0007669"/>
    <property type="project" value="UniProtKB-KW"/>
</dbReference>
<dbReference type="FunFam" id="3.40.50.1820:FF:000012">
    <property type="entry name" value="Lipase"/>
    <property type="match status" value="1"/>
</dbReference>
<dbReference type="Gene3D" id="3.40.50.1820">
    <property type="entry name" value="alpha/beta hydrolase"/>
    <property type="match status" value="1"/>
</dbReference>
<dbReference type="InterPro" id="IPR029058">
    <property type="entry name" value="AB_hydrolase_fold"/>
</dbReference>
<dbReference type="InterPro" id="IPR006693">
    <property type="entry name" value="AB_hydrolase_lipase"/>
</dbReference>
<dbReference type="InterPro" id="IPR025483">
    <property type="entry name" value="Lipase_euk"/>
</dbReference>
<dbReference type="PANTHER" id="PTHR11005">
    <property type="entry name" value="LYSOSOMAL ACID LIPASE-RELATED"/>
    <property type="match status" value="1"/>
</dbReference>
<dbReference type="Pfam" id="PF04083">
    <property type="entry name" value="Abhydro_lipase"/>
    <property type="match status" value="1"/>
</dbReference>
<dbReference type="PIRSF" id="PIRSF000862">
    <property type="entry name" value="Steryl_ester_lip"/>
    <property type="match status" value="1"/>
</dbReference>
<dbReference type="SUPFAM" id="SSF53474">
    <property type="entry name" value="alpha/beta-Hydrolases"/>
    <property type="match status" value="1"/>
</dbReference>
<dbReference type="PROSITE" id="PS00120">
    <property type="entry name" value="LIPASE_SER"/>
    <property type="match status" value="1"/>
</dbReference>
<evidence type="ECO:0000250" key="1"/>
<evidence type="ECO:0000255" key="2">
    <source>
        <dbReference type="PROSITE-ProRule" id="PRU10037"/>
    </source>
</evidence>
<evidence type="ECO:0000269" key="3">
    <source>
    </source>
</evidence>
<evidence type="ECO:0000305" key="4"/>
<name>LIPJ_HUMAN</name>
<sequence>MNISQIISYWGYPDEEYDIVTEDGYILGLYRIPYWRTDNNKNLAQRVVVYLQHGLLTSASSWISNLPNNSLGFILADAGYDVWMGNSRGNTWSRKHLYLETSSKEFWAFSFDEMAKYDLPASIDFTVKQTRQEEIFYVGHSQGTTIGFITFSTISKIAERIKIFFALAPVFSTKYLKSPLIRMTYKWKSIVMAFSGNKDFLPKTSFKKFIGSKLCPLQIFDKICLNILFMMFGYDPKNLNMSRLDVYFSHNPAGTSVQNMLHWSQLLNSTHLKAYDWGSPDLNLVHYNQTTSPLYNMTNMNVATAIWNGKSDLLADPEDVNILHSEITNHIYYKTISYYNHIDSLFGLDVYDQVYHEIIDIIQDNL</sequence>
<gene>
    <name type="primary">LIPJ</name>
    <name type="synonym">LIPL1</name>
</gene>
<proteinExistence type="evidence at transcript level"/>
<protein>
    <recommendedName>
        <fullName>Lipase member J</fullName>
        <ecNumber>3.1.1.-</ecNumber>
    </recommendedName>
    <alternativeName>
        <fullName>Lipase-like abhydrolase domain-containing protein 1</fullName>
    </alternativeName>
</protein>